<evidence type="ECO:0000255" key="1">
    <source>
        <dbReference type="HAMAP-Rule" id="MF_01347"/>
    </source>
</evidence>
<accession>Q98QU5</accession>
<reference key="1">
    <citation type="journal article" date="2001" name="Nucleic Acids Res.">
        <title>The complete genome sequence of the murine respiratory pathogen Mycoplasma pulmonis.</title>
        <authorList>
            <person name="Chambaud I."/>
            <person name="Heilig R."/>
            <person name="Ferris S."/>
            <person name="Barbe V."/>
            <person name="Samson D."/>
            <person name="Galisson F."/>
            <person name="Moszer I."/>
            <person name="Dybvig K."/>
            <person name="Wroblewski H."/>
            <person name="Viari A."/>
            <person name="Rocha E.P.C."/>
            <person name="Blanchard A."/>
        </authorList>
    </citation>
    <scope>NUCLEOTIDE SEQUENCE [LARGE SCALE GENOMIC DNA]</scope>
    <source>
        <strain>UAB CTIP</strain>
    </source>
</reference>
<proteinExistence type="inferred from homology"/>
<name>ATPB1_MYCPU</name>
<comment type="function">
    <text evidence="1">Produces ATP from ADP in the presence of a proton gradient across the membrane. The catalytic sites are hosted primarily by the beta subunits.</text>
</comment>
<comment type="catalytic activity">
    <reaction evidence="1">
        <text>ATP + H2O + 4 H(+)(in) = ADP + phosphate + 5 H(+)(out)</text>
        <dbReference type="Rhea" id="RHEA:57720"/>
        <dbReference type="ChEBI" id="CHEBI:15377"/>
        <dbReference type="ChEBI" id="CHEBI:15378"/>
        <dbReference type="ChEBI" id="CHEBI:30616"/>
        <dbReference type="ChEBI" id="CHEBI:43474"/>
        <dbReference type="ChEBI" id="CHEBI:456216"/>
        <dbReference type="EC" id="7.1.2.2"/>
    </reaction>
</comment>
<comment type="subunit">
    <text evidence="1">F-type ATPases have 2 components, CF(1) - the catalytic core - and CF(0) - the membrane proton channel. CF(1) has five subunits: alpha(3), beta(3), gamma(1), delta(1), epsilon(1). CF(0) has three main subunits: a(1), b(2) and c(9-12). The alpha and beta chains form an alternating ring which encloses part of the gamma chain. CF(1) is attached to CF(0) by a central stalk formed by the gamma and epsilon chains, while a peripheral stalk is formed by the delta and b chains.</text>
</comment>
<comment type="subcellular location">
    <subcellularLocation>
        <location evidence="1">Cell membrane</location>
        <topology evidence="1">Peripheral membrane protein</topology>
    </subcellularLocation>
</comment>
<comment type="similarity">
    <text evidence="1">Belongs to the ATPase alpha/beta chains family.</text>
</comment>
<organism>
    <name type="scientific">Mycoplasmopsis pulmonis (strain UAB CTIP)</name>
    <name type="common">Mycoplasma pulmonis</name>
    <dbReference type="NCBI Taxonomy" id="272635"/>
    <lineage>
        <taxon>Bacteria</taxon>
        <taxon>Bacillati</taxon>
        <taxon>Mycoplasmatota</taxon>
        <taxon>Mycoplasmoidales</taxon>
        <taxon>Metamycoplasmataceae</taxon>
        <taxon>Mycoplasmopsis</taxon>
    </lineage>
</organism>
<dbReference type="EC" id="7.1.2.2" evidence="1"/>
<dbReference type="EMBL" id="AL445563">
    <property type="protein sequence ID" value="CAC13439.1"/>
    <property type="molecule type" value="Genomic_DNA"/>
</dbReference>
<dbReference type="PIR" id="B90545">
    <property type="entry name" value="B90545"/>
</dbReference>
<dbReference type="RefSeq" id="WP_010925070.1">
    <property type="nucleotide sequence ID" value="NC_002771.1"/>
</dbReference>
<dbReference type="SMR" id="Q98QU5"/>
<dbReference type="STRING" id="272635.gene:17576856"/>
<dbReference type="KEGG" id="mpu:MYPU_2660"/>
<dbReference type="eggNOG" id="COG0055">
    <property type="taxonomic scope" value="Bacteria"/>
</dbReference>
<dbReference type="HOGENOM" id="CLU_022398_0_2_14"/>
<dbReference type="BioCyc" id="MPUL272635:G1GT6-267-MONOMER"/>
<dbReference type="Proteomes" id="UP000000528">
    <property type="component" value="Chromosome"/>
</dbReference>
<dbReference type="GO" id="GO:0005886">
    <property type="term" value="C:plasma membrane"/>
    <property type="evidence" value="ECO:0007669"/>
    <property type="project" value="UniProtKB-SubCell"/>
</dbReference>
<dbReference type="GO" id="GO:0045259">
    <property type="term" value="C:proton-transporting ATP synthase complex"/>
    <property type="evidence" value="ECO:0007669"/>
    <property type="project" value="UniProtKB-KW"/>
</dbReference>
<dbReference type="GO" id="GO:0005524">
    <property type="term" value="F:ATP binding"/>
    <property type="evidence" value="ECO:0007669"/>
    <property type="project" value="UniProtKB-UniRule"/>
</dbReference>
<dbReference type="GO" id="GO:0016887">
    <property type="term" value="F:ATP hydrolysis activity"/>
    <property type="evidence" value="ECO:0007669"/>
    <property type="project" value="InterPro"/>
</dbReference>
<dbReference type="GO" id="GO:0046933">
    <property type="term" value="F:proton-transporting ATP synthase activity, rotational mechanism"/>
    <property type="evidence" value="ECO:0007669"/>
    <property type="project" value="UniProtKB-UniRule"/>
</dbReference>
<dbReference type="CDD" id="cd18110">
    <property type="entry name" value="ATP-synt_F1_beta_C"/>
    <property type="match status" value="1"/>
</dbReference>
<dbReference type="CDD" id="cd18115">
    <property type="entry name" value="ATP-synt_F1_beta_N"/>
    <property type="match status" value="1"/>
</dbReference>
<dbReference type="CDD" id="cd01133">
    <property type="entry name" value="F1-ATPase_beta_CD"/>
    <property type="match status" value="1"/>
</dbReference>
<dbReference type="FunFam" id="1.10.1140.10:FF:000001">
    <property type="entry name" value="ATP synthase subunit beta"/>
    <property type="match status" value="1"/>
</dbReference>
<dbReference type="FunFam" id="3.40.50.300:FF:000004">
    <property type="entry name" value="ATP synthase subunit beta"/>
    <property type="match status" value="1"/>
</dbReference>
<dbReference type="Gene3D" id="2.40.10.170">
    <property type="match status" value="1"/>
</dbReference>
<dbReference type="Gene3D" id="1.10.1140.10">
    <property type="entry name" value="Bovine Mitochondrial F1-atpase, Atp Synthase Beta Chain, Chain D, domain 3"/>
    <property type="match status" value="1"/>
</dbReference>
<dbReference type="Gene3D" id="3.40.50.300">
    <property type="entry name" value="P-loop containing nucleotide triphosphate hydrolases"/>
    <property type="match status" value="1"/>
</dbReference>
<dbReference type="HAMAP" id="MF_01347">
    <property type="entry name" value="ATP_synth_beta_bact"/>
    <property type="match status" value="1"/>
</dbReference>
<dbReference type="InterPro" id="IPR003593">
    <property type="entry name" value="AAA+_ATPase"/>
</dbReference>
<dbReference type="InterPro" id="IPR055190">
    <property type="entry name" value="ATP-synt_VA_C"/>
</dbReference>
<dbReference type="InterPro" id="IPR005722">
    <property type="entry name" value="ATP_synth_F1_bsu"/>
</dbReference>
<dbReference type="InterPro" id="IPR020003">
    <property type="entry name" value="ATPase_a/bsu_AS"/>
</dbReference>
<dbReference type="InterPro" id="IPR050053">
    <property type="entry name" value="ATPase_alpha/beta_chains"/>
</dbReference>
<dbReference type="InterPro" id="IPR004100">
    <property type="entry name" value="ATPase_F1/V1/A1_a/bsu_N"/>
</dbReference>
<dbReference type="InterPro" id="IPR036121">
    <property type="entry name" value="ATPase_F1/V1/A1_a/bsu_N_sf"/>
</dbReference>
<dbReference type="InterPro" id="IPR000194">
    <property type="entry name" value="ATPase_F1/V1/A1_a/bsu_nucl-bd"/>
</dbReference>
<dbReference type="InterPro" id="IPR024034">
    <property type="entry name" value="ATPase_F1/V1_b/a_C"/>
</dbReference>
<dbReference type="InterPro" id="IPR027417">
    <property type="entry name" value="P-loop_NTPase"/>
</dbReference>
<dbReference type="NCBIfam" id="TIGR01039">
    <property type="entry name" value="atpD"/>
    <property type="match status" value="1"/>
</dbReference>
<dbReference type="PANTHER" id="PTHR15184">
    <property type="entry name" value="ATP SYNTHASE"/>
    <property type="match status" value="1"/>
</dbReference>
<dbReference type="PANTHER" id="PTHR15184:SF71">
    <property type="entry name" value="ATP SYNTHASE SUBUNIT BETA, MITOCHONDRIAL"/>
    <property type="match status" value="1"/>
</dbReference>
<dbReference type="Pfam" id="PF00006">
    <property type="entry name" value="ATP-synt_ab"/>
    <property type="match status" value="1"/>
</dbReference>
<dbReference type="Pfam" id="PF02874">
    <property type="entry name" value="ATP-synt_ab_N"/>
    <property type="match status" value="1"/>
</dbReference>
<dbReference type="Pfam" id="PF22919">
    <property type="entry name" value="ATP-synt_VA_C"/>
    <property type="match status" value="1"/>
</dbReference>
<dbReference type="SMART" id="SM00382">
    <property type="entry name" value="AAA"/>
    <property type="match status" value="1"/>
</dbReference>
<dbReference type="SUPFAM" id="SSF47917">
    <property type="entry name" value="C-terminal domain of alpha and beta subunits of F1 ATP synthase"/>
    <property type="match status" value="1"/>
</dbReference>
<dbReference type="SUPFAM" id="SSF50615">
    <property type="entry name" value="N-terminal domain of alpha and beta subunits of F1 ATP synthase"/>
    <property type="match status" value="1"/>
</dbReference>
<dbReference type="SUPFAM" id="SSF52540">
    <property type="entry name" value="P-loop containing nucleoside triphosphate hydrolases"/>
    <property type="match status" value="1"/>
</dbReference>
<dbReference type="PROSITE" id="PS00152">
    <property type="entry name" value="ATPASE_ALPHA_BETA"/>
    <property type="match status" value="1"/>
</dbReference>
<protein>
    <recommendedName>
        <fullName evidence="1">ATP synthase subunit beta 1</fullName>
        <ecNumber evidence="1">7.1.2.2</ecNumber>
    </recommendedName>
    <alternativeName>
        <fullName evidence="1">ATP synthase F1 sector subunit beta 1</fullName>
    </alternativeName>
    <alternativeName>
        <fullName evidence="1">F-ATPase subunit beta 1</fullName>
    </alternativeName>
</protein>
<keyword id="KW-0066">ATP synthesis</keyword>
<keyword id="KW-0067">ATP-binding</keyword>
<keyword id="KW-1003">Cell membrane</keyword>
<keyword id="KW-0139">CF(1)</keyword>
<keyword id="KW-0375">Hydrogen ion transport</keyword>
<keyword id="KW-0406">Ion transport</keyword>
<keyword id="KW-0472">Membrane</keyword>
<keyword id="KW-0547">Nucleotide-binding</keyword>
<keyword id="KW-1185">Reference proteome</keyword>
<keyword id="KW-1278">Translocase</keyword>
<keyword id="KW-0813">Transport</keyword>
<feature type="chain" id="PRO_0000254308" description="ATP synthase subunit beta 1">
    <location>
        <begin position="1"/>
        <end position="475"/>
    </location>
</feature>
<feature type="binding site" evidence="1">
    <location>
        <begin position="153"/>
        <end position="160"/>
    </location>
    <ligand>
        <name>ATP</name>
        <dbReference type="ChEBI" id="CHEBI:30616"/>
    </ligand>
</feature>
<gene>
    <name evidence="1" type="primary">atpD1</name>
    <name type="ordered locus">MYPU_2660</name>
</gene>
<sequence>MSQKNVGKIVQILGPVVDISFAGQKIPAIYNNLELVFENNKYNFEVAQHIGDEVVRTISMVSTNGLSRGLEVIDTGAPIMVPVGKEVLSRMFNVLGQTIDNKGEIEAKEFRSIHASAPSYEEQNDSSEILETGIKVIDLLVPYSKGGKIGLFGGAGVGKTVLVQELINNIATQHGGLSVFAGVGERTREGNDLYHEMIASGVLDKTTLVFGQMNEPPGARMRVALTGLTMAEYFRDKFKQDVLLFIDNIFRFTQAGSEVSALLGRMPSAVGYQPTLATEMGQLQERITSTKNGSITSVQAVYVPADDLTDPAPATTFTHLDAKTVLERNIAALGIYPAIDPLASSSRMLDPLIIGNEHYLVALEVQNILQRFKELQDIIAILGIGELSEEDKKLVFRARKIRNFLSQPFTVAEKFSGKKGKFVPLKETIRSFKEILEGKHDNLPEDAFLYVGSIDEAIEKAKGQSNATTANNNNA</sequence>